<protein>
    <recommendedName>
        <fullName evidence="1">Gamma-glutamyl phosphate reductase</fullName>
        <shortName evidence="1">GPR</shortName>
        <ecNumber evidence="1">1.2.1.41</ecNumber>
    </recommendedName>
    <alternativeName>
        <fullName evidence="1">Glutamate-5-semialdehyde dehydrogenase</fullName>
    </alternativeName>
    <alternativeName>
        <fullName evidence="1">Glutamyl-gamma-semialdehyde dehydrogenase</fullName>
        <shortName evidence="1">GSA dehydrogenase</shortName>
    </alternativeName>
</protein>
<comment type="function">
    <text evidence="1">Catalyzes the NADPH-dependent reduction of L-glutamate 5-phosphate into L-glutamate 5-semialdehyde and phosphate. The product spontaneously undergoes cyclization to form 1-pyrroline-5-carboxylate.</text>
</comment>
<comment type="catalytic activity">
    <reaction evidence="1">
        <text>L-glutamate 5-semialdehyde + phosphate + NADP(+) = L-glutamyl 5-phosphate + NADPH + H(+)</text>
        <dbReference type="Rhea" id="RHEA:19541"/>
        <dbReference type="ChEBI" id="CHEBI:15378"/>
        <dbReference type="ChEBI" id="CHEBI:43474"/>
        <dbReference type="ChEBI" id="CHEBI:57783"/>
        <dbReference type="ChEBI" id="CHEBI:58066"/>
        <dbReference type="ChEBI" id="CHEBI:58274"/>
        <dbReference type="ChEBI" id="CHEBI:58349"/>
        <dbReference type="EC" id="1.2.1.41"/>
    </reaction>
</comment>
<comment type="pathway">
    <text evidence="1">Amino-acid biosynthesis; L-proline biosynthesis; L-glutamate 5-semialdehyde from L-glutamate: step 2/2.</text>
</comment>
<comment type="subcellular location">
    <subcellularLocation>
        <location evidence="1">Cytoplasm</location>
    </subcellularLocation>
</comment>
<comment type="similarity">
    <text evidence="1">Belongs to the gamma-glutamyl phosphate reductase family.</text>
</comment>
<evidence type="ECO:0000255" key="1">
    <source>
        <dbReference type="HAMAP-Rule" id="MF_00412"/>
    </source>
</evidence>
<keyword id="KW-0028">Amino-acid biosynthesis</keyword>
<keyword id="KW-0963">Cytoplasm</keyword>
<keyword id="KW-0521">NADP</keyword>
<keyword id="KW-0560">Oxidoreductase</keyword>
<keyword id="KW-0641">Proline biosynthesis</keyword>
<proteinExistence type="inferred from homology"/>
<organism>
    <name type="scientific">Salinispora arenicola (strain CNS-205)</name>
    <dbReference type="NCBI Taxonomy" id="391037"/>
    <lineage>
        <taxon>Bacteria</taxon>
        <taxon>Bacillati</taxon>
        <taxon>Actinomycetota</taxon>
        <taxon>Actinomycetes</taxon>
        <taxon>Micromonosporales</taxon>
        <taxon>Micromonosporaceae</taxon>
        <taxon>Salinispora</taxon>
    </lineage>
</organism>
<reference key="1">
    <citation type="submission" date="2007-10" db="EMBL/GenBank/DDBJ databases">
        <title>Complete sequence of Salinispora arenicola CNS-205.</title>
        <authorList>
            <consortium name="US DOE Joint Genome Institute"/>
            <person name="Copeland A."/>
            <person name="Lucas S."/>
            <person name="Lapidus A."/>
            <person name="Barry K."/>
            <person name="Glavina del Rio T."/>
            <person name="Dalin E."/>
            <person name="Tice H."/>
            <person name="Pitluck S."/>
            <person name="Foster B."/>
            <person name="Schmutz J."/>
            <person name="Larimer F."/>
            <person name="Land M."/>
            <person name="Hauser L."/>
            <person name="Kyrpides N."/>
            <person name="Ivanova N."/>
            <person name="Jensen P.R."/>
            <person name="Moore B.S."/>
            <person name="Penn K."/>
            <person name="Jenkins C."/>
            <person name="Udwary D."/>
            <person name="Xiang L."/>
            <person name="Gontang E."/>
            <person name="Richardson P."/>
        </authorList>
    </citation>
    <scope>NUCLEOTIDE SEQUENCE [LARGE SCALE GENOMIC DNA]</scope>
    <source>
        <strain>CNS-205</strain>
    </source>
</reference>
<dbReference type="EC" id="1.2.1.41" evidence="1"/>
<dbReference type="EMBL" id="CP000850">
    <property type="protein sequence ID" value="ABV96385.1"/>
    <property type="molecule type" value="Genomic_DNA"/>
</dbReference>
<dbReference type="SMR" id="A8M064"/>
<dbReference type="STRING" id="391037.Sare_0456"/>
<dbReference type="KEGG" id="saq:Sare_0456"/>
<dbReference type="PATRIC" id="fig|391037.6.peg.465"/>
<dbReference type="eggNOG" id="COG0014">
    <property type="taxonomic scope" value="Bacteria"/>
</dbReference>
<dbReference type="HOGENOM" id="CLU_030231_0_0_11"/>
<dbReference type="OrthoDB" id="9809970at2"/>
<dbReference type="UniPathway" id="UPA00098">
    <property type="reaction ID" value="UER00360"/>
</dbReference>
<dbReference type="GO" id="GO:0005737">
    <property type="term" value="C:cytoplasm"/>
    <property type="evidence" value="ECO:0007669"/>
    <property type="project" value="UniProtKB-SubCell"/>
</dbReference>
<dbReference type="GO" id="GO:0004350">
    <property type="term" value="F:glutamate-5-semialdehyde dehydrogenase activity"/>
    <property type="evidence" value="ECO:0007669"/>
    <property type="project" value="UniProtKB-UniRule"/>
</dbReference>
<dbReference type="GO" id="GO:0050661">
    <property type="term" value="F:NADP binding"/>
    <property type="evidence" value="ECO:0007669"/>
    <property type="project" value="InterPro"/>
</dbReference>
<dbReference type="GO" id="GO:0055129">
    <property type="term" value="P:L-proline biosynthetic process"/>
    <property type="evidence" value="ECO:0007669"/>
    <property type="project" value="UniProtKB-UniRule"/>
</dbReference>
<dbReference type="CDD" id="cd07079">
    <property type="entry name" value="ALDH_F18-19_ProA-GPR"/>
    <property type="match status" value="1"/>
</dbReference>
<dbReference type="FunFam" id="3.40.309.10:FF:000006">
    <property type="entry name" value="Gamma-glutamyl phosphate reductase"/>
    <property type="match status" value="1"/>
</dbReference>
<dbReference type="Gene3D" id="3.40.605.10">
    <property type="entry name" value="Aldehyde Dehydrogenase, Chain A, domain 1"/>
    <property type="match status" value="1"/>
</dbReference>
<dbReference type="Gene3D" id="3.40.309.10">
    <property type="entry name" value="Aldehyde Dehydrogenase, Chain A, domain 2"/>
    <property type="match status" value="1"/>
</dbReference>
<dbReference type="HAMAP" id="MF_00412">
    <property type="entry name" value="ProA"/>
    <property type="match status" value="1"/>
</dbReference>
<dbReference type="InterPro" id="IPR016161">
    <property type="entry name" value="Ald_DH/histidinol_DH"/>
</dbReference>
<dbReference type="InterPro" id="IPR016163">
    <property type="entry name" value="Ald_DH_C"/>
</dbReference>
<dbReference type="InterPro" id="IPR016162">
    <property type="entry name" value="Ald_DH_N"/>
</dbReference>
<dbReference type="InterPro" id="IPR015590">
    <property type="entry name" value="Aldehyde_DH_dom"/>
</dbReference>
<dbReference type="InterPro" id="IPR020593">
    <property type="entry name" value="G-glutamylP_reductase_CS"/>
</dbReference>
<dbReference type="InterPro" id="IPR012134">
    <property type="entry name" value="Glu-5-SA_DH"/>
</dbReference>
<dbReference type="InterPro" id="IPR000965">
    <property type="entry name" value="GPR_dom"/>
</dbReference>
<dbReference type="NCBIfam" id="NF001221">
    <property type="entry name" value="PRK00197.1"/>
    <property type="match status" value="1"/>
</dbReference>
<dbReference type="NCBIfam" id="TIGR00407">
    <property type="entry name" value="proA"/>
    <property type="match status" value="1"/>
</dbReference>
<dbReference type="PANTHER" id="PTHR11063:SF8">
    <property type="entry name" value="DELTA-1-PYRROLINE-5-CARBOXYLATE SYNTHASE"/>
    <property type="match status" value="1"/>
</dbReference>
<dbReference type="PANTHER" id="PTHR11063">
    <property type="entry name" value="GLUTAMATE SEMIALDEHYDE DEHYDROGENASE"/>
    <property type="match status" value="1"/>
</dbReference>
<dbReference type="Pfam" id="PF00171">
    <property type="entry name" value="Aldedh"/>
    <property type="match status" value="1"/>
</dbReference>
<dbReference type="PIRSF" id="PIRSF000151">
    <property type="entry name" value="GPR"/>
    <property type="match status" value="1"/>
</dbReference>
<dbReference type="SUPFAM" id="SSF53720">
    <property type="entry name" value="ALDH-like"/>
    <property type="match status" value="1"/>
</dbReference>
<dbReference type="PROSITE" id="PS01223">
    <property type="entry name" value="PROA"/>
    <property type="match status" value="1"/>
</dbReference>
<gene>
    <name evidence="1" type="primary">proA</name>
    <name type="ordered locus">Sare_0456</name>
</gene>
<name>PROA_SALAI</name>
<sequence length="413" mass="42218">MSVVEQAQRARTAAAELAVATRSVKDAALHAMADALVARTPEILAANGADLAAGREGGLNAAVLDRLALDTGRVAGIADALRQMAALPDPIGEVVRGSTLPNGLELRQVRVPFGVVGIVYEARPNVTVDAAGICLKSGNAVLLRGSSSAAQSNAALVAVLRDAVAGAGLPADSVQLLDATTRDSVKELMRARGLVDVLIPRGGAALIRTVVEESTVPVIETGVGNCHVYVDAAADVSKAVAIALNAKTQRLSTCNTAESLLVHAAVADAFLPPALAALAAAGVTVHGCPEVARYSAAVLPATDEDYATEYLSADISVAVVDSLDAAVAHIRRYGTGHTEAIVTDSQPAAREFVARVDAAAVMVNASTRFTDGGEFGFGAEIGISTQKLHARGPMGLPELTSTKYVVTGDGQLR</sequence>
<accession>A8M064</accession>
<feature type="chain" id="PRO_0000340912" description="Gamma-glutamyl phosphate reductase">
    <location>
        <begin position="1"/>
        <end position="413"/>
    </location>
</feature>